<comment type="function">
    <text evidence="2">Converts o-succinylbenzoyl-CoA (OSB-CoA) to 1,4-dihydroxy-2-naphthoyl-CoA (DHNA-CoA).</text>
</comment>
<comment type="catalytic activity">
    <reaction evidence="2">
        <text>2-succinylbenzoyl-CoA + H(+) = 1,4-dihydroxy-2-naphthoyl-CoA + H2O</text>
        <dbReference type="Rhea" id="RHEA:26562"/>
        <dbReference type="ChEBI" id="CHEBI:15377"/>
        <dbReference type="ChEBI" id="CHEBI:15378"/>
        <dbReference type="ChEBI" id="CHEBI:57364"/>
        <dbReference type="ChEBI" id="CHEBI:58897"/>
        <dbReference type="EC" id="4.1.3.36"/>
    </reaction>
</comment>
<comment type="cofactor">
    <cofactor evidence="2">
        <name>hydrogencarbonate</name>
        <dbReference type="ChEBI" id="CHEBI:17544"/>
    </cofactor>
</comment>
<comment type="pathway">
    <text evidence="2">Quinol/quinone metabolism; 1,4-dihydroxy-2-naphthoate biosynthesis; 1,4-dihydroxy-2-naphthoate from chorismate: step 6/7.</text>
</comment>
<comment type="pathway">
    <text evidence="2">Quinol/quinone metabolism; menaquinone biosynthesis.</text>
</comment>
<comment type="subunit">
    <text evidence="3">Homohexamer.</text>
</comment>
<comment type="similarity">
    <text evidence="2">Belongs to the enoyl-CoA hydratase/isomerase family. MenB subfamily.</text>
</comment>
<name>MENB_SALTY</name>
<proteinExistence type="evidence at protein level"/>
<organism>
    <name type="scientific">Salmonella typhimurium (strain LT2 / SGSC1412 / ATCC 700720)</name>
    <dbReference type="NCBI Taxonomy" id="99287"/>
    <lineage>
        <taxon>Bacteria</taxon>
        <taxon>Pseudomonadati</taxon>
        <taxon>Pseudomonadota</taxon>
        <taxon>Gammaproteobacteria</taxon>
        <taxon>Enterobacterales</taxon>
        <taxon>Enterobacteriaceae</taxon>
        <taxon>Salmonella</taxon>
    </lineage>
</organism>
<reference key="1">
    <citation type="journal article" date="2001" name="Nature">
        <title>Complete genome sequence of Salmonella enterica serovar Typhimurium LT2.</title>
        <authorList>
            <person name="McClelland M."/>
            <person name="Sanderson K.E."/>
            <person name="Spieth J."/>
            <person name="Clifton S.W."/>
            <person name="Latreille P."/>
            <person name="Courtney L."/>
            <person name="Porwollik S."/>
            <person name="Ali J."/>
            <person name="Dante M."/>
            <person name="Du F."/>
            <person name="Hou S."/>
            <person name="Layman D."/>
            <person name="Leonard S."/>
            <person name="Nguyen C."/>
            <person name="Scott K."/>
            <person name="Holmes A."/>
            <person name="Grewal N."/>
            <person name="Mulvaney E."/>
            <person name="Ryan E."/>
            <person name="Sun H."/>
            <person name="Florea L."/>
            <person name="Miller W."/>
            <person name="Stoneking T."/>
            <person name="Nhan M."/>
            <person name="Waterston R."/>
            <person name="Wilson R.K."/>
        </authorList>
    </citation>
    <scope>NUCLEOTIDE SEQUENCE [LARGE SCALE GENOMIC DNA]</scope>
    <source>
        <strain>LT2 / SGSC1412 / ATCC 700720</strain>
    </source>
</reference>
<reference key="2">
    <citation type="submission" date="2009-10" db="EMBL/GenBank/DDBJ databases">
        <title>2.15 angstrom resolution crystal structure of naphthoate synthase from Salmonella typhimurium.</title>
        <authorList>
            <person name="Minasov G."/>
            <person name="Wawrzak Z."/>
            <person name="Skarina T."/>
            <person name="Onopriyenko O."/>
            <person name="Peterson S.N."/>
            <person name="Savchenko A."/>
            <person name="Anderson W.F."/>
        </authorList>
    </citation>
    <scope>X-RAY CRYSTALLOGRAPHY (2.3 ANGSTROMS) IN COMPLEX WITH HYDROGENCARBONATE ION</scope>
    <scope>SUBUNIT</scope>
    <source>
        <strain>LT2 / SGSC1412 / ATCC 700720</strain>
    </source>
</reference>
<protein>
    <recommendedName>
        <fullName evidence="2">1,4-dihydroxy-2-naphthoyl-CoA synthase</fullName>
        <shortName evidence="2">DHNA-CoA synthase</shortName>
        <ecNumber evidence="2">4.1.3.36</ecNumber>
    </recommendedName>
</protein>
<evidence type="ECO:0000250" key="1">
    <source>
        <dbReference type="UniProtKB" id="P0ABU0"/>
    </source>
</evidence>
<evidence type="ECO:0000255" key="2">
    <source>
        <dbReference type="HAMAP-Rule" id="MF_01934"/>
    </source>
</evidence>
<evidence type="ECO:0000269" key="3">
    <source ref="2"/>
</evidence>
<evidence type="ECO:0007829" key="4">
    <source>
        <dbReference type="PDB" id="3H02"/>
    </source>
</evidence>
<feature type="chain" id="PRO_0000403188" description="1,4-dihydroxy-2-naphthoyl-CoA synthase">
    <location>
        <begin position="1"/>
        <end position="285"/>
    </location>
</feature>
<feature type="binding site" description="in other chain" evidence="1 2">
    <location>
        <position position="45"/>
    </location>
    <ligand>
        <name>substrate</name>
        <note>ligand shared between two neighboring subunits</note>
    </ligand>
</feature>
<feature type="binding site" description="in other chain" evidence="2">
    <location>
        <begin position="84"/>
        <end position="88"/>
    </location>
    <ligand>
        <name>substrate</name>
        <note>ligand shared between two neighboring subunits</note>
    </ligand>
</feature>
<feature type="binding site" description="in other chain" evidence="1 2">
    <location>
        <position position="97"/>
    </location>
    <ligand>
        <name>substrate</name>
        <note>ligand shared between two neighboring subunits</note>
    </ligand>
</feature>
<feature type="binding site" description="in other chain" evidence="1 2">
    <location>
        <begin position="129"/>
        <end position="133"/>
    </location>
    <ligand>
        <name>substrate</name>
        <note>ligand shared between two neighboring subunits</note>
    </ligand>
</feature>
<feature type="binding site" evidence="2 3">
    <location>
        <begin position="154"/>
        <end position="156"/>
    </location>
    <ligand>
        <name>hydrogencarbonate</name>
        <dbReference type="ChEBI" id="CHEBI:17544"/>
    </ligand>
</feature>
<feature type="binding site" description="in other chain" evidence="1 2">
    <location>
        <position position="155"/>
    </location>
    <ligand>
        <name>substrate</name>
        <note>ligand shared between two neighboring subunits</note>
    </ligand>
</feature>
<feature type="binding site" description="in other chain" evidence="1 2">
    <location>
        <position position="161"/>
    </location>
    <ligand>
        <name>substrate</name>
        <note>ligand shared between two neighboring subunits</note>
    </ligand>
</feature>
<feature type="binding site" evidence="1 2">
    <location>
        <position position="258"/>
    </location>
    <ligand>
        <name>substrate</name>
        <note>ligand shared between two neighboring subunits</note>
    </ligand>
</feature>
<feature type="binding site" evidence="1 2">
    <location>
        <position position="273"/>
    </location>
    <ligand>
        <name>substrate</name>
        <note>ligand shared between two neighboring subunits</note>
    </ligand>
</feature>
<feature type="site" description="Important for catalysis" evidence="1 2">
    <location>
        <position position="97"/>
    </location>
</feature>
<feature type="site" description="Important for catalysis" evidence="1 2">
    <location>
        <position position="258"/>
    </location>
</feature>
<feature type="helix" evidence="4">
    <location>
        <begin position="6"/>
        <end position="9"/>
    </location>
</feature>
<feature type="strand" evidence="4">
    <location>
        <begin position="15"/>
        <end position="17"/>
    </location>
</feature>
<feature type="strand" evidence="4">
    <location>
        <begin position="23"/>
        <end position="30"/>
    </location>
</feature>
<feature type="strand" evidence="4">
    <location>
        <begin position="33"/>
        <end position="39"/>
    </location>
</feature>
<feature type="helix" evidence="4">
    <location>
        <begin position="42"/>
        <end position="44"/>
    </location>
</feature>
<feature type="helix" evidence="4">
    <location>
        <begin position="50"/>
        <end position="65"/>
    </location>
</feature>
<feature type="strand" evidence="4">
    <location>
        <begin position="71"/>
        <end position="83"/>
    </location>
</feature>
<feature type="helix" evidence="4">
    <location>
        <begin position="108"/>
        <end position="117"/>
    </location>
</feature>
<feature type="strand" evidence="4">
    <location>
        <begin position="122"/>
        <end position="126"/>
    </location>
</feature>
<feature type="strand" evidence="4">
    <location>
        <begin position="128"/>
        <end position="131"/>
    </location>
</feature>
<feature type="helix" evidence="4">
    <location>
        <begin position="133"/>
        <end position="140"/>
    </location>
</feature>
<feature type="strand" evidence="4">
    <location>
        <begin position="141"/>
        <end position="147"/>
    </location>
</feature>
<feature type="strand" evidence="4">
    <location>
        <begin position="151"/>
        <end position="153"/>
    </location>
</feature>
<feature type="helix" evidence="4">
    <location>
        <begin position="156"/>
        <end position="159"/>
    </location>
</feature>
<feature type="helix" evidence="4">
    <location>
        <begin position="166"/>
        <end position="175"/>
    </location>
</feature>
<feature type="helix" evidence="4">
    <location>
        <begin position="177"/>
        <end position="186"/>
    </location>
</feature>
<feature type="helix" evidence="4">
    <location>
        <begin position="192"/>
        <end position="197"/>
    </location>
</feature>
<feature type="strand" evidence="4">
    <location>
        <begin position="200"/>
        <end position="205"/>
    </location>
</feature>
<feature type="helix" evidence="4">
    <location>
        <begin position="207"/>
        <end position="209"/>
    </location>
</feature>
<feature type="helix" evidence="4">
    <location>
        <begin position="210"/>
        <end position="222"/>
    </location>
</feature>
<feature type="helix" evidence="4">
    <location>
        <begin position="226"/>
        <end position="238"/>
    </location>
</feature>
<feature type="helix" evidence="4">
    <location>
        <begin position="242"/>
        <end position="257"/>
    </location>
</feature>
<feature type="helix" evidence="4">
    <location>
        <begin position="261"/>
        <end position="271"/>
    </location>
</feature>
<sequence>MIYPDETMLYAPVEWHDCSEGYTDIRYEKSTDGIAKITINRPQVRNAFRPLTVKEMIQALADARYDDNVGVIILTGEGDKAFCAGGDQKVRGDYGGYQDDSGVHHLNVLDFQRQIRTCPKPVVAMVAGYSIGGGHVLHMMCDLTIAAENAIFGQTGPKVGSFDGGWGASYMARIVGQKKAREIWFLCRQYDAQQALDMGLVNTVVPLADLEKETVRWCREMLQNSPMALRCLKAALNADCDGQAGLQELAGNATMLFYMTEEGQEGRNAFNQKRQPDFSKFKRNP</sequence>
<accession>Q7CQ56</accession>
<keyword id="KW-0002">3D-structure</keyword>
<keyword id="KW-0456">Lyase</keyword>
<keyword id="KW-0474">Menaquinone biosynthesis</keyword>
<keyword id="KW-1185">Reference proteome</keyword>
<dbReference type="EC" id="4.1.3.36" evidence="2"/>
<dbReference type="EMBL" id="AE006468">
    <property type="protein sequence ID" value="AAL21208.1"/>
    <property type="molecule type" value="Genomic_DNA"/>
</dbReference>
<dbReference type="RefSeq" id="NP_461249.1">
    <property type="nucleotide sequence ID" value="NC_003197.2"/>
</dbReference>
<dbReference type="RefSeq" id="WP_000640013.1">
    <property type="nucleotide sequence ID" value="NC_003197.2"/>
</dbReference>
<dbReference type="PDB" id="3H02">
    <property type="method" value="X-ray"/>
    <property type="resolution" value="2.15 A"/>
    <property type="chains" value="A/B/C/D/E/F=1-285"/>
</dbReference>
<dbReference type="PDBsum" id="3H02"/>
<dbReference type="SMR" id="Q7CQ56"/>
<dbReference type="STRING" id="99287.STM2307"/>
<dbReference type="PaxDb" id="99287-STM2307"/>
<dbReference type="GeneID" id="1253829"/>
<dbReference type="KEGG" id="stm:STM2307"/>
<dbReference type="PATRIC" id="fig|99287.12.peg.2442"/>
<dbReference type="HOGENOM" id="CLU_009834_7_7_6"/>
<dbReference type="OMA" id="FCDARED"/>
<dbReference type="PhylomeDB" id="Q7CQ56"/>
<dbReference type="BioCyc" id="SENT99287:STM2307-MONOMER"/>
<dbReference type="UniPathway" id="UPA00079"/>
<dbReference type="UniPathway" id="UPA01057">
    <property type="reaction ID" value="UER00167"/>
</dbReference>
<dbReference type="EvolutionaryTrace" id="Q7CQ56"/>
<dbReference type="Proteomes" id="UP000001014">
    <property type="component" value="Chromosome"/>
</dbReference>
<dbReference type="GO" id="GO:0005829">
    <property type="term" value="C:cytosol"/>
    <property type="evidence" value="ECO:0000318"/>
    <property type="project" value="GO_Central"/>
</dbReference>
<dbReference type="GO" id="GO:0008935">
    <property type="term" value="F:1,4-dihydroxy-2-naphthoyl-CoA synthase activity"/>
    <property type="evidence" value="ECO:0000318"/>
    <property type="project" value="GO_Central"/>
</dbReference>
<dbReference type="GO" id="GO:0009234">
    <property type="term" value="P:menaquinone biosynthetic process"/>
    <property type="evidence" value="ECO:0000318"/>
    <property type="project" value="GO_Central"/>
</dbReference>
<dbReference type="CDD" id="cd06558">
    <property type="entry name" value="crotonase-like"/>
    <property type="match status" value="1"/>
</dbReference>
<dbReference type="FunFam" id="1.10.12.10:FF:000002">
    <property type="entry name" value="1,4-dihydroxy-2-naphthoyl-CoA synthase"/>
    <property type="match status" value="1"/>
</dbReference>
<dbReference type="FunFam" id="3.90.226.10:FF:000003">
    <property type="entry name" value="1,4-dihydroxy-2-naphthoyl-CoA synthase"/>
    <property type="match status" value="1"/>
</dbReference>
<dbReference type="Gene3D" id="3.90.226.10">
    <property type="entry name" value="2-enoyl-CoA Hydratase, Chain A, domain 1"/>
    <property type="match status" value="1"/>
</dbReference>
<dbReference type="Gene3D" id="1.10.12.10">
    <property type="entry name" value="Lyase 2-enoyl-coa Hydratase, Chain A, domain 2"/>
    <property type="match status" value="1"/>
</dbReference>
<dbReference type="HAMAP" id="MF_01934">
    <property type="entry name" value="MenB"/>
    <property type="match status" value="1"/>
</dbReference>
<dbReference type="InterPro" id="IPR029045">
    <property type="entry name" value="ClpP/crotonase-like_dom_sf"/>
</dbReference>
<dbReference type="InterPro" id="IPR010198">
    <property type="entry name" value="DHNA-CoA_synthase_MenB"/>
</dbReference>
<dbReference type="InterPro" id="IPR018376">
    <property type="entry name" value="Enoyl-CoA_hyd/isom_CS"/>
</dbReference>
<dbReference type="InterPro" id="IPR001753">
    <property type="entry name" value="Enoyl-CoA_hydra/iso"/>
</dbReference>
<dbReference type="InterPro" id="IPR014748">
    <property type="entry name" value="Enoyl-CoA_hydra_C"/>
</dbReference>
<dbReference type="NCBIfam" id="TIGR01929">
    <property type="entry name" value="menB"/>
    <property type="match status" value="1"/>
</dbReference>
<dbReference type="NCBIfam" id="NF005637">
    <property type="entry name" value="PRK07396.1"/>
    <property type="match status" value="1"/>
</dbReference>
<dbReference type="PANTHER" id="PTHR43113:SF1">
    <property type="entry name" value="1,4-DIHYDROXY-2-NAPHTHOYL-COA SYNTHASE, PEROXISOMAL"/>
    <property type="match status" value="1"/>
</dbReference>
<dbReference type="PANTHER" id="PTHR43113">
    <property type="entry name" value="NUCLEOSIDE-DIPHOSPHATE-SUGAR EPIMERASE"/>
    <property type="match status" value="1"/>
</dbReference>
<dbReference type="Pfam" id="PF00378">
    <property type="entry name" value="ECH_1"/>
    <property type="match status" value="1"/>
</dbReference>
<dbReference type="SUPFAM" id="SSF52096">
    <property type="entry name" value="ClpP/crotonase"/>
    <property type="match status" value="1"/>
</dbReference>
<dbReference type="PROSITE" id="PS00166">
    <property type="entry name" value="ENOYL_COA_HYDRATASE"/>
    <property type="match status" value="1"/>
</dbReference>
<gene>
    <name evidence="2" type="primary">menB</name>
    <name type="ordered locus">STM2307</name>
</gene>